<comment type="function">
    <text evidence="1">Located on the platform of the 30S subunit.</text>
</comment>
<comment type="subunit">
    <text evidence="1">Part of the 30S ribosomal subunit.</text>
</comment>
<comment type="similarity">
    <text evidence="1">Belongs to the universal ribosomal protein uS11 family.</text>
</comment>
<feature type="chain" id="PRO_1000214377" description="Small ribosomal subunit protein uS11">
    <location>
        <begin position="1"/>
        <end position="139"/>
    </location>
</feature>
<feature type="region of interest" description="Disordered" evidence="2">
    <location>
        <begin position="118"/>
        <end position="139"/>
    </location>
</feature>
<dbReference type="EMBL" id="CP001463">
    <property type="protein sequence ID" value="ACS89407.1"/>
    <property type="molecule type" value="Genomic_DNA"/>
</dbReference>
<dbReference type="RefSeq" id="WP_015848627.1">
    <property type="nucleotide sequence ID" value="NC_012883.1"/>
</dbReference>
<dbReference type="SMR" id="C6A1B2"/>
<dbReference type="STRING" id="604354.TSIB_0341"/>
<dbReference type="GeneID" id="8095315"/>
<dbReference type="KEGG" id="tsi:TSIB_0341"/>
<dbReference type="eggNOG" id="arCOG04240">
    <property type="taxonomic scope" value="Archaea"/>
</dbReference>
<dbReference type="HOGENOM" id="CLU_072439_6_1_2"/>
<dbReference type="OrthoDB" id="12054at2157"/>
<dbReference type="Proteomes" id="UP000009079">
    <property type="component" value="Chromosome"/>
</dbReference>
<dbReference type="GO" id="GO:1990904">
    <property type="term" value="C:ribonucleoprotein complex"/>
    <property type="evidence" value="ECO:0007669"/>
    <property type="project" value="UniProtKB-KW"/>
</dbReference>
<dbReference type="GO" id="GO:0005840">
    <property type="term" value="C:ribosome"/>
    <property type="evidence" value="ECO:0007669"/>
    <property type="project" value="UniProtKB-KW"/>
</dbReference>
<dbReference type="GO" id="GO:0019843">
    <property type="term" value="F:rRNA binding"/>
    <property type="evidence" value="ECO:0007669"/>
    <property type="project" value="UniProtKB-UniRule"/>
</dbReference>
<dbReference type="GO" id="GO:0003735">
    <property type="term" value="F:structural constituent of ribosome"/>
    <property type="evidence" value="ECO:0007669"/>
    <property type="project" value="InterPro"/>
</dbReference>
<dbReference type="GO" id="GO:0006412">
    <property type="term" value="P:translation"/>
    <property type="evidence" value="ECO:0007669"/>
    <property type="project" value="UniProtKB-UniRule"/>
</dbReference>
<dbReference type="FunFam" id="3.30.420.80:FF:000007">
    <property type="entry name" value="30S ribosomal protein S11"/>
    <property type="match status" value="1"/>
</dbReference>
<dbReference type="Gene3D" id="3.30.420.80">
    <property type="entry name" value="Ribosomal protein S11"/>
    <property type="match status" value="1"/>
</dbReference>
<dbReference type="HAMAP" id="MF_01310">
    <property type="entry name" value="Ribosomal_uS11"/>
    <property type="match status" value="1"/>
</dbReference>
<dbReference type="InterPro" id="IPR001971">
    <property type="entry name" value="Ribosomal_uS11"/>
</dbReference>
<dbReference type="InterPro" id="IPR019961">
    <property type="entry name" value="Ribosomal_uS11_archaeal"/>
</dbReference>
<dbReference type="InterPro" id="IPR018102">
    <property type="entry name" value="Ribosomal_uS11_CS"/>
</dbReference>
<dbReference type="InterPro" id="IPR036967">
    <property type="entry name" value="Ribosomal_uS11_sf"/>
</dbReference>
<dbReference type="NCBIfam" id="TIGR03628">
    <property type="entry name" value="arch_S11P"/>
    <property type="match status" value="1"/>
</dbReference>
<dbReference type="NCBIfam" id="NF007176">
    <property type="entry name" value="PRK09607.1"/>
    <property type="match status" value="1"/>
</dbReference>
<dbReference type="PANTHER" id="PTHR11759">
    <property type="entry name" value="40S RIBOSOMAL PROTEIN S14/30S RIBOSOMAL PROTEIN S11"/>
    <property type="match status" value="1"/>
</dbReference>
<dbReference type="Pfam" id="PF00411">
    <property type="entry name" value="Ribosomal_S11"/>
    <property type="match status" value="1"/>
</dbReference>
<dbReference type="PIRSF" id="PIRSF002131">
    <property type="entry name" value="Ribosomal_S11"/>
    <property type="match status" value="1"/>
</dbReference>
<dbReference type="SUPFAM" id="SSF53137">
    <property type="entry name" value="Translational machinery components"/>
    <property type="match status" value="1"/>
</dbReference>
<dbReference type="PROSITE" id="PS00054">
    <property type="entry name" value="RIBOSOMAL_S11"/>
    <property type="match status" value="1"/>
</dbReference>
<reference key="1">
    <citation type="journal article" date="2009" name="Appl. Environ. Microbiol.">
        <title>Metabolic versatility and indigenous origin of the archaeon Thermococcus sibiricus, isolated from a siberian oil reservoir, as revealed by genome analysis.</title>
        <authorList>
            <person name="Mardanov A.V."/>
            <person name="Ravin N.V."/>
            <person name="Svetlitchnyi V.A."/>
            <person name="Beletsky A.V."/>
            <person name="Miroshnichenko M.L."/>
            <person name="Bonch-Osmolovskaya E.A."/>
            <person name="Skryabin K.G."/>
        </authorList>
    </citation>
    <scope>NUCLEOTIDE SEQUENCE [LARGE SCALE GENOMIC DNA]</scope>
    <source>
        <strain>DSM 12597 / MM 739</strain>
    </source>
</reference>
<evidence type="ECO:0000255" key="1">
    <source>
        <dbReference type="HAMAP-Rule" id="MF_01310"/>
    </source>
</evidence>
<evidence type="ECO:0000256" key="2">
    <source>
        <dbReference type="SAM" id="MobiDB-lite"/>
    </source>
</evidence>
<evidence type="ECO:0000305" key="3"/>
<protein>
    <recommendedName>
        <fullName evidence="1">Small ribosomal subunit protein uS11</fullName>
    </recommendedName>
    <alternativeName>
        <fullName evidence="3">30S ribosomal protein S11</fullName>
    </alternativeName>
</protein>
<name>RS11_THESM</name>
<gene>
    <name evidence="1" type="primary">rps11</name>
    <name type="ordered locus">TSIB_0341</name>
</gene>
<organism>
    <name type="scientific">Thermococcus sibiricus (strain DSM 12597 / MM 739)</name>
    <dbReference type="NCBI Taxonomy" id="604354"/>
    <lineage>
        <taxon>Archaea</taxon>
        <taxon>Methanobacteriati</taxon>
        <taxon>Methanobacteriota</taxon>
        <taxon>Thermococci</taxon>
        <taxon>Thermococcales</taxon>
        <taxon>Thermococcaceae</taxon>
        <taxon>Thermococcus</taxon>
    </lineage>
</organism>
<sequence>MSEEQQTVNIKKKEKWGVAHIYASYNNTIIHITDLTGAETISKWSGGMVVKADRDESSPYAAMIAARRAAEEAMEKGINGVHIKVRAPGGSKSKNPGPGAQAAIRALARAGLRIGRVEDVTPIPHDGTRPKGGRRGRRV</sequence>
<proteinExistence type="inferred from homology"/>
<accession>C6A1B2</accession>
<keyword id="KW-1185">Reference proteome</keyword>
<keyword id="KW-0687">Ribonucleoprotein</keyword>
<keyword id="KW-0689">Ribosomal protein</keyword>
<keyword id="KW-0694">RNA-binding</keyword>
<keyword id="KW-0699">rRNA-binding</keyword>